<organism>
    <name type="scientific">Brucella canis (strain ATCC 23365 / NCTC 10854 / RM-666)</name>
    <dbReference type="NCBI Taxonomy" id="483179"/>
    <lineage>
        <taxon>Bacteria</taxon>
        <taxon>Pseudomonadati</taxon>
        <taxon>Pseudomonadota</taxon>
        <taxon>Alphaproteobacteria</taxon>
        <taxon>Hyphomicrobiales</taxon>
        <taxon>Brucellaceae</taxon>
        <taxon>Brucella/Ochrobactrum group</taxon>
        <taxon>Brucella</taxon>
    </lineage>
</organism>
<accession>A9M7U1</accession>
<proteinExistence type="inferred from homology"/>
<keyword id="KW-0131">Cell cycle</keyword>
<keyword id="KW-0132">Cell division</keyword>
<keyword id="KW-0133">Cell shape</keyword>
<keyword id="KW-0961">Cell wall biogenesis/degradation</keyword>
<keyword id="KW-0963">Cytoplasm</keyword>
<keyword id="KW-0573">Peptidoglycan synthesis</keyword>
<keyword id="KW-0670">Pyruvate</keyword>
<keyword id="KW-1185">Reference proteome</keyword>
<keyword id="KW-0808">Transferase</keyword>
<gene>
    <name evidence="1" type="primary">murA</name>
    <name type="ordered locus">BCAN_A0258</name>
</gene>
<dbReference type="EC" id="2.5.1.7" evidence="1"/>
<dbReference type="EMBL" id="CP000872">
    <property type="protein sequence ID" value="ABX61351.1"/>
    <property type="molecule type" value="Genomic_DNA"/>
</dbReference>
<dbReference type="RefSeq" id="WP_002965536.1">
    <property type="nucleotide sequence ID" value="NC_010103.1"/>
</dbReference>
<dbReference type="SMR" id="A9M7U1"/>
<dbReference type="GeneID" id="97534345"/>
<dbReference type="KEGG" id="bcs:BCAN_A0258"/>
<dbReference type="HOGENOM" id="CLU_027387_0_0_5"/>
<dbReference type="UniPathway" id="UPA00219"/>
<dbReference type="Proteomes" id="UP000001385">
    <property type="component" value="Chromosome I"/>
</dbReference>
<dbReference type="GO" id="GO:0005737">
    <property type="term" value="C:cytoplasm"/>
    <property type="evidence" value="ECO:0007669"/>
    <property type="project" value="UniProtKB-SubCell"/>
</dbReference>
<dbReference type="GO" id="GO:0008760">
    <property type="term" value="F:UDP-N-acetylglucosamine 1-carboxyvinyltransferase activity"/>
    <property type="evidence" value="ECO:0007669"/>
    <property type="project" value="UniProtKB-UniRule"/>
</dbReference>
<dbReference type="GO" id="GO:0051301">
    <property type="term" value="P:cell division"/>
    <property type="evidence" value="ECO:0007669"/>
    <property type="project" value="UniProtKB-KW"/>
</dbReference>
<dbReference type="GO" id="GO:0071555">
    <property type="term" value="P:cell wall organization"/>
    <property type="evidence" value="ECO:0007669"/>
    <property type="project" value="UniProtKB-KW"/>
</dbReference>
<dbReference type="GO" id="GO:0009252">
    <property type="term" value="P:peptidoglycan biosynthetic process"/>
    <property type="evidence" value="ECO:0007669"/>
    <property type="project" value="UniProtKB-UniRule"/>
</dbReference>
<dbReference type="GO" id="GO:0008360">
    <property type="term" value="P:regulation of cell shape"/>
    <property type="evidence" value="ECO:0007669"/>
    <property type="project" value="UniProtKB-KW"/>
</dbReference>
<dbReference type="GO" id="GO:0019277">
    <property type="term" value="P:UDP-N-acetylgalactosamine biosynthetic process"/>
    <property type="evidence" value="ECO:0007669"/>
    <property type="project" value="InterPro"/>
</dbReference>
<dbReference type="CDD" id="cd01555">
    <property type="entry name" value="UdpNAET"/>
    <property type="match status" value="1"/>
</dbReference>
<dbReference type="FunFam" id="3.65.10.10:FF:000001">
    <property type="entry name" value="UDP-N-acetylglucosamine 1-carboxyvinyltransferase"/>
    <property type="match status" value="1"/>
</dbReference>
<dbReference type="Gene3D" id="3.65.10.10">
    <property type="entry name" value="Enolpyruvate transferase domain"/>
    <property type="match status" value="2"/>
</dbReference>
<dbReference type="HAMAP" id="MF_00111">
    <property type="entry name" value="MurA"/>
    <property type="match status" value="1"/>
</dbReference>
<dbReference type="InterPro" id="IPR001986">
    <property type="entry name" value="Enolpyruvate_Tfrase_dom"/>
</dbReference>
<dbReference type="InterPro" id="IPR036968">
    <property type="entry name" value="Enolpyruvate_Tfrase_sf"/>
</dbReference>
<dbReference type="InterPro" id="IPR050068">
    <property type="entry name" value="MurA_subfamily"/>
</dbReference>
<dbReference type="InterPro" id="IPR013792">
    <property type="entry name" value="RNA3'P_cycl/enolpyr_Trfase_a/b"/>
</dbReference>
<dbReference type="InterPro" id="IPR005750">
    <property type="entry name" value="UDP_GlcNAc_COvinyl_MurA"/>
</dbReference>
<dbReference type="NCBIfam" id="TIGR01072">
    <property type="entry name" value="murA"/>
    <property type="match status" value="1"/>
</dbReference>
<dbReference type="NCBIfam" id="NF006873">
    <property type="entry name" value="PRK09369.1"/>
    <property type="match status" value="1"/>
</dbReference>
<dbReference type="PANTHER" id="PTHR43783">
    <property type="entry name" value="UDP-N-ACETYLGLUCOSAMINE 1-CARBOXYVINYLTRANSFERASE"/>
    <property type="match status" value="1"/>
</dbReference>
<dbReference type="PANTHER" id="PTHR43783:SF1">
    <property type="entry name" value="UDP-N-ACETYLGLUCOSAMINE 1-CARBOXYVINYLTRANSFERASE"/>
    <property type="match status" value="1"/>
</dbReference>
<dbReference type="Pfam" id="PF00275">
    <property type="entry name" value="EPSP_synthase"/>
    <property type="match status" value="1"/>
</dbReference>
<dbReference type="SUPFAM" id="SSF55205">
    <property type="entry name" value="EPT/RTPC-like"/>
    <property type="match status" value="1"/>
</dbReference>
<reference key="1">
    <citation type="submission" date="2007-10" db="EMBL/GenBank/DDBJ databases">
        <title>Brucella canis ATCC 23365 whole genome shotgun sequencing project.</title>
        <authorList>
            <person name="Setubal J.C."/>
            <person name="Bowns C."/>
            <person name="Boyle S."/>
            <person name="Crasta O.R."/>
            <person name="Czar M.J."/>
            <person name="Dharmanolla C."/>
            <person name="Gillespie J.J."/>
            <person name="Kenyon R.W."/>
            <person name="Lu J."/>
            <person name="Mane S."/>
            <person name="Mohapatra S."/>
            <person name="Nagrani S."/>
            <person name="Purkayastha A."/>
            <person name="Rajasimha H.K."/>
            <person name="Shallom J.M."/>
            <person name="Shallom S."/>
            <person name="Shukla M."/>
            <person name="Snyder E.E."/>
            <person name="Sobral B.W."/>
            <person name="Wattam A.R."/>
            <person name="Will R."/>
            <person name="Williams K."/>
            <person name="Yoo H."/>
            <person name="Bruce D."/>
            <person name="Detter C."/>
            <person name="Munk C."/>
            <person name="Brettin T.S."/>
        </authorList>
    </citation>
    <scope>NUCLEOTIDE SEQUENCE [LARGE SCALE GENOMIC DNA]</scope>
    <source>
        <strain>ATCC 23365 / NCTC 10854 / RM-666</strain>
    </source>
</reference>
<protein>
    <recommendedName>
        <fullName evidence="1">UDP-N-acetylglucosamine 1-carboxyvinyltransferase</fullName>
        <ecNumber evidence="1">2.5.1.7</ecNumber>
    </recommendedName>
    <alternativeName>
        <fullName evidence="1">Enoylpyruvate transferase</fullName>
    </alternativeName>
    <alternativeName>
        <fullName evidence="1">UDP-N-acetylglucosamine enolpyruvyl transferase</fullName>
        <shortName evidence="1">EPT</shortName>
    </alternativeName>
</protein>
<evidence type="ECO:0000255" key="1">
    <source>
        <dbReference type="HAMAP-Rule" id="MF_00111"/>
    </source>
</evidence>
<name>MURA_BRUC2</name>
<sequence length="429" mass="45719">MDRIKIVGGNKLNGVIPISGAKNAALPLMIASLLTDDTLTLENVPHLADVEQLIRILSNHGVDYSVNGRREHQNGPYSRTIHFTARNIVDTTAPYELVSRMRASFWVIGPLLARMGEANVSLPGGCAIGTRPVDLLLDALLALGAEIDIENGYAKAKARNGLVGARYKFPKVSVGATHVMLMAATLAKGETIIENAAREPEVANLADCLNAMGAKISGAGSSTIHVQGVTNLSGARVRIIPDRIEAGTYAMAVAMTGGDVLLEGAQESQLSCVLETLRQAGAEINETNSGLRVVRNGHGIQPVDITTDPFPGFPTDLQAQFMGLMTRAKGTSHITETIFENRFMHVQELARLGAKISLSGQTATVEGVERLKGAQVMATDLRASVSLVIAGLAAEGETIVNRVYHLDRGFERLEEKLSRCGADVKRISG</sequence>
<comment type="function">
    <text evidence="1">Cell wall formation. Adds enolpyruvyl to UDP-N-acetylglucosamine.</text>
</comment>
<comment type="catalytic activity">
    <reaction evidence="1">
        <text>phosphoenolpyruvate + UDP-N-acetyl-alpha-D-glucosamine = UDP-N-acetyl-3-O-(1-carboxyvinyl)-alpha-D-glucosamine + phosphate</text>
        <dbReference type="Rhea" id="RHEA:18681"/>
        <dbReference type="ChEBI" id="CHEBI:43474"/>
        <dbReference type="ChEBI" id="CHEBI:57705"/>
        <dbReference type="ChEBI" id="CHEBI:58702"/>
        <dbReference type="ChEBI" id="CHEBI:68483"/>
        <dbReference type="EC" id="2.5.1.7"/>
    </reaction>
</comment>
<comment type="pathway">
    <text evidence="1">Cell wall biogenesis; peptidoglycan biosynthesis.</text>
</comment>
<comment type="subcellular location">
    <subcellularLocation>
        <location evidence="1">Cytoplasm</location>
    </subcellularLocation>
</comment>
<comment type="similarity">
    <text evidence="1">Belongs to the EPSP synthase family. MurA subfamily.</text>
</comment>
<feature type="chain" id="PRO_1000075964" description="UDP-N-acetylglucosamine 1-carboxyvinyltransferase">
    <location>
        <begin position="1"/>
        <end position="429"/>
    </location>
</feature>
<feature type="active site" description="Proton donor" evidence="1">
    <location>
        <position position="126"/>
    </location>
</feature>
<feature type="binding site" evidence="1">
    <location>
        <begin position="22"/>
        <end position="23"/>
    </location>
    <ligand>
        <name>phosphoenolpyruvate</name>
        <dbReference type="ChEBI" id="CHEBI:58702"/>
    </ligand>
</feature>
<feature type="binding site" evidence="1">
    <location>
        <position position="102"/>
    </location>
    <ligand>
        <name>UDP-N-acetyl-alpha-D-glucosamine</name>
        <dbReference type="ChEBI" id="CHEBI:57705"/>
    </ligand>
</feature>
<feature type="binding site" evidence="1">
    <location>
        <begin position="131"/>
        <end position="135"/>
    </location>
    <ligand>
        <name>UDP-N-acetyl-alpha-D-glucosamine</name>
        <dbReference type="ChEBI" id="CHEBI:57705"/>
    </ligand>
</feature>
<feature type="binding site" evidence="1">
    <location>
        <begin position="171"/>
        <end position="174"/>
    </location>
    <ligand>
        <name>UDP-N-acetyl-alpha-D-glucosamine</name>
        <dbReference type="ChEBI" id="CHEBI:57705"/>
    </ligand>
</feature>
<feature type="binding site" evidence="1">
    <location>
        <position position="316"/>
    </location>
    <ligand>
        <name>UDP-N-acetyl-alpha-D-glucosamine</name>
        <dbReference type="ChEBI" id="CHEBI:57705"/>
    </ligand>
</feature>
<feature type="binding site" evidence="1">
    <location>
        <position position="338"/>
    </location>
    <ligand>
        <name>UDP-N-acetyl-alpha-D-glucosamine</name>
        <dbReference type="ChEBI" id="CHEBI:57705"/>
    </ligand>
</feature>
<feature type="modified residue" description="2-(S-cysteinyl)pyruvic acid O-phosphothioketal" evidence="1">
    <location>
        <position position="126"/>
    </location>
</feature>